<sequence length="858" mass="96288">MNIDKFTAHAKSVIANHQSLAIKNDHQQILPLHLLSSLLSEETGIIQALINNIGGNIHLLKDQVQLELNKIPKIQVDGGGQIYYSAEDLKVLEKSRSIAKDSGDSFVTIERIFEALTYDNTIAGKILTNNGINSKKLAAAILHLRKGKKADTESAENSYDALKRYGRDVTELAKNGKLDPIIGRDEEIRRAVQVLSRRMKNNPVLIGAPGVGKTAIIEGLAQRIFNKDVPETLINCRIIELDIGALIAGAQYRGEFEKRLKSVLSEIKESSGEIILFIDELHLLVGTGKVEGAMDASNLLKPMLARGELHCIGATTLDEYRKYIEKDAALARRFQPVYVGEPSVEDTISILRGIKEKYELHHAVRISDSAIVAAATLSNRYITDRYLPDKAIDLIDEACSRMKIELSSKPEELDELDRRIIQIKIELAALKKENDEHSKKKITSLTEELKQLDSKSYDMNTKWQAAKSKLQQAQKLKEELEQARIDLDRAERDANLAKASELKYGIIPEIMNKLQAAENMDNKGLLKEIVSESDIASIISRITGIPIDTMLSSERERLLVIEQKLSESVIGQDEAIKGISDAVRRSRSGIQDINRPLGSFLFLGPTGVGKTELTKALAGFLFDDRNALLRIDMSEYMEKHSISRLIGAPPGYIGYDQGGVLTESVRRRPYQVILFDEVEKAHLDIFNIMLQILDEGRLTNSQGITVDFKNTIIVLTSNLGAEILVNQQEDEDTYKVKDEVMQYVRAVFKPEFLNRLDEIILFHRLNRNNIYDIVKIQLGSLKKILLQQNIILEFNESALNYLAEKGYDPSFGARPLKRLIQREIQNNLAKMILAGKISSGNTVKIAREKEELRIEIID</sequence>
<proteinExistence type="inferred from homology"/>
<feature type="chain" id="PRO_0000281062" description="Chaperone protein ClpB">
    <location>
        <begin position="1"/>
        <end position="858"/>
    </location>
</feature>
<feature type="domain" description="Clp R" evidence="2">
    <location>
        <begin position="3"/>
        <end position="147"/>
    </location>
</feature>
<feature type="region of interest" description="Repeat 1" evidence="2">
    <location>
        <begin position="6"/>
        <end position="71"/>
    </location>
</feature>
<feature type="region of interest" description="Repeat 2" evidence="2">
    <location>
        <begin position="84"/>
        <end position="147"/>
    </location>
</feature>
<feature type="region of interest" description="NBD1" evidence="1">
    <location>
        <begin position="160"/>
        <end position="341"/>
    </location>
</feature>
<feature type="region of interest" description="Linker" evidence="1">
    <location>
        <begin position="342"/>
        <end position="544"/>
    </location>
</feature>
<feature type="region of interest" description="NBD2" evidence="1">
    <location>
        <begin position="554"/>
        <end position="764"/>
    </location>
</feature>
<feature type="region of interest" description="C-terminal" evidence="1">
    <location>
        <begin position="765"/>
        <end position="858"/>
    </location>
</feature>
<feature type="coiled-coil region" evidence="1">
    <location>
        <begin position="392"/>
        <end position="523"/>
    </location>
</feature>
<feature type="binding site" evidence="1">
    <location>
        <begin position="207"/>
        <end position="214"/>
    </location>
    <ligand>
        <name>ATP</name>
        <dbReference type="ChEBI" id="CHEBI:30616"/>
        <label>1</label>
    </ligand>
</feature>
<feature type="binding site" evidence="1">
    <location>
        <begin position="604"/>
        <end position="611"/>
    </location>
    <ligand>
        <name>ATP</name>
        <dbReference type="ChEBI" id="CHEBI:30616"/>
        <label>2</label>
    </ligand>
</feature>
<evidence type="ECO:0000250" key="1"/>
<evidence type="ECO:0000255" key="2">
    <source>
        <dbReference type="PROSITE-ProRule" id="PRU01251"/>
    </source>
</evidence>
<evidence type="ECO:0000305" key="3"/>
<comment type="function">
    <text evidence="1">Part of a stress-induced multi-chaperone system, it is involved in the recovery of the cell from heat-induced damage, in cooperation with DnaK, DnaJ and GrpE. Acts before DnaK, in the processing of protein aggregates. Protein binding stimulates the ATPase activity; ATP hydrolysis unfolds the denatured protein aggregates, which probably helps expose new hydrophobic binding sites on the surface of ClpB-bound aggregates, contributing to the solubilization and refolding of denatured protein aggregates by DnaK (By similarity).</text>
</comment>
<comment type="subunit">
    <text evidence="1">Homohexamer. The oligomerization is ATP-dependent (By similarity).</text>
</comment>
<comment type="subcellular location">
    <subcellularLocation>
        <location evidence="3">Cytoplasm</location>
    </subcellularLocation>
</comment>
<comment type="domain">
    <text evidence="1">The Clp repeat (R) domain probably functions as a substrate-discriminating domain, recruiting aggregated proteins to the ClpB hexamer and/or stabilizing bound proteins. The NBD2 domain is responsible for oligomerization, whereas the NBD1 domain stabilizes the hexamer probably in an ATP-dependent manner. The movement of the coiled-coil domain is essential for ClpB ability to rescue proteins from an aggregated state, probably by pulling apart large aggregated proteins, which are bound between the coiled-coils motifs of adjacent ClpB subunits in the functional hexamer (By similarity).</text>
</comment>
<comment type="similarity">
    <text evidence="3">Belongs to the ClpA/ClpB family.</text>
</comment>
<accession>Q68XR2</accession>
<protein>
    <recommendedName>
        <fullName>Chaperone protein ClpB</fullName>
    </recommendedName>
</protein>
<organism>
    <name type="scientific">Rickettsia typhi (strain ATCC VR-144 / Wilmington)</name>
    <dbReference type="NCBI Taxonomy" id="257363"/>
    <lineage>
        <taxon>Bacteria</taxon>
        <taxon>Pseudomonadati</taxon>
        <taxon>Pseudomonadota</taxon>
        <taxon>Alphaproteobacteria</taxon>
        <taxon>Rickettsiales</taxon>
        <taxon>Rickettsiaceae</taxon>
        <taxon>Rickettsieae</taxon>
        <taxon>Rickettsia</taxon>
        <taxon>typhus group</taxon>
    </lineage>
</organism>
<name>CLPB_RICTY</name>
<dbReference type="EMBL" id="AE017197">
    <property type="protein sequence ID" value="AAU03580.1"/>
    <property type="molecule type" value="Genomic_DNA"/>
</dbReference>
<dbReference type="RefSeq" id="WP_011190567.1">
    <property type="nucleotide sequence ID" value="NC_006142.1"/>
</dbReference>
<dbReference type="SMR" id="Q68XR2"/>
<dbReference type="KEGG" id="rty:RT0094"/>
<dbReference type="eggNOG" id="COG0542">
    <property type="taxonomic scope" value="Bacteria"/>
</dbReference>
<dbReference type="HOGENOM" id="CLU_005070_4_0_5"/>
<dbReference type="OrthoDB" id="9803641at2"/>
<dbReference type="Proteomes" id="UP000000604">
    <property type="component" value="Chromosome"/>
</dbReference>
<dbReference type="GO" id="GO:0005737">
    <property type="term" value="C:cytoplasm"/>
    <property type="evidence" value="ECO:0007669"/>
    <property type="project" value="UniProtKB-SubCell"/>
</dbReference>
<dbReference type="GO" id="GO:0005524">
    <property type="term" value="F:ATP binding"/>
    <property type="evidence" value="ECO:0007669"/>
    <property type="project" value="UniProtKB-KW"/>
</dbReference>
<dbReference type="GO" id="GO:0016887">
    <property type="term" value="F:ATP hydrolysis activity"/>
    <property type="evidence" value="ECO:0007669"/>
    <property type="project" value="InterPro"/>
</dbReference>
<dbReference type="GO" id="GO:0034605">
    <property type="term" value="P:cellular response to heat"/>
    <property type="evidence" value="ECO:0007669"/>
    <property type="project" value="TreeGrafter"/>
</dbReference>
<dbReference type="GO" id="GO:0042026">
    <property type="term" value="P:protein refolding"/>
    <property type="evidence" value="ECO:0007669"/>
    <property type="project" value="InterPro"/>
</dbReference>
<dbReference type="CDD" id="cd00009">
    <property type="entry name" value="AAA"/>
    <property type="match status" value="1"/>
</dbReference>
<dbReference type="CDD" id="cd19499">
    <property type="entry name" value="RecA-like_ClpB_Hsp104-like"/>
    <property type="match status" value="1"/>
</dbReference>
<dbReference type="FunFam" id="3.40.50.300:FF:000120">
    <property type="entry name" value="ATP-dependent chaperone ClpB"/>
    <property type="match status" value="1"/>
</dbReference>
<dbReference type="FunFam" id="3.40.50.300:FF:000025">
    <property type="entry name" value="ATP-dependent Clp protease subunit"/>
    <property type="match status" value="1"/>
</dbReference>
<dbReference type="FunFam" id="3.40.50.300:FF:000010">
    <property type="entry name" value="Chaperone clpB 1, putative"/>
    <property type="match status" value="1"/>
</dbReference>
<dbReference type="Gene3D" id="1.10.8.60">
    <property type="match status" value="1"/>
</dbReference>
<dbReference type="Gene3D" id="1.10.1780.10">
    <property type="entry name" value="Clp, N-terminal domain"/>
    <property type="match status" value="1"/>
</dbReference>
<dbReference type="Gene3D" id="3.40.50.300">
    <property type="entry name" value="P-loop containing nucleotide triphosphate hydrolases"/>
    <property type="match status" value="3"/>
</dbReference>
<dbReference type="InterPro" id="IPR003593">
    <property type="entry name" value="AAA+_ATPase"/>
</dbReference>
<dbReference type="InterPro" id="IPR003959">
    <property type="entry name" value="ATPase_AAA_core"/>
</dbReference>
<dbReference type="InterPro" id="IPR017730">
    <property type="entry name" value="Chaperonin_ClpB"/>
</dbReference>
<dbReference type="InterPro" id="IPR019489">
    <property type="entry name" value="Clp_ATPase_C"/>
</dbReference>
<dbReference type="InterPro" id="IPR036628">
    <property type="entry name" value="Clp_N_dom_sf"/>
</dbReference>
<dbReference type="InterPro" id="IPR004176">
    <property type="entry name" value="Clp_R_dom"/>
</dbReference>
<dbReference type="InterPro" id="IPR001270">
    <property type="entry name" value="ClpA/B"/>
</dbReference>
<dbReference type="InterPro" id="IPR018368">
    <property type="entry name" value="ClpA/B_CS1"/>
</dbReference>
<dbReference type="InterPro" id="IPR028299">
    <property type="entry name" value="ClpA/B_CS2"/>
</dbReference>
<dbReference type="InterPro" id="IPR041546">
    <property type="entry name" value="ClpA/ClpB_AAA_lid"/>
</dbReference>
<dbReference type="InterPro" id="IPR050130">
    <property type="entry name" value="ClpA_ClpB"/>
</dbReference>
<dbReference type="InterPro" id="IPR027417">
    <property type="entry name" value="P-loop_NTPase"/>
</dbReference>
<dbReference type="NCBIfam" id="TIGR03346">
    <property type="entry name" value="chaperone_ClpB"/>
    <property type="match status" value="1"/>
</dbReference>
<dbReference type="PANTHER" id="PTHR11638">
    <property type="entry name" value="ATP-DEPENDENT CLP PROTEASE"/>
    <property type="match status" value="1"/>
</dbReference>
<dbReference type="PANTHER" id="PTHR11638:SF18">
    <property type="entry name" value="HEAT SHOCK PROTEIN 104"/>
    <property type="match status" value="1"/>
</dbReference>
<dbReference type="Pfam" id="PF00004">
    <property type="entry name" value="AAA"/>
    <property type="match status" value="1"/>
</dbReference>
<dbReference type="Pfam" id="PF07724">
    <property type="entry name" value="AAA_2"/>
    <property type="match status" value="1"/>
</dbReference>
<dbReference type="Pfam" id="PF17871">
    <property type="entry name" value="AAA_lid_9"/>
    <property type="match status" value="1"/>
</dbReference>
<dbReference type="Pfam" id="PF02861">
    <property type="entry name" value="Clp_N"/>
    <property type="match status" value="2"/>
</dbReference>
<dbReference type="Pfam" id="PF10431">
    <property type="entry name" value="ClpB_D2-small"/>
    <property type="match status" value="1"/>
</dbReference>
<dbReference type="PRINTS" id="PR00300">
    <property type="entry name" value="CLPPROTEASEA"/>
</dbReference>
<dbReference type="SMART" id="SM00382">
    <property type="entry name" value="AAA"/>
    <property type="match status" value="2"/>
</dbReference>
<dbReference type="SMART" id="SM01086">
    <property type="entry name" value="ClpB_D2-small"/>
    <property type="match status" value="1"/>
</dbReference>
<dbReference type="SUPFAM" id="SSF81923">
    <property type="entry name" value="Double Clp-N motif"/>
    <property type="match status" value="1"/>
</dbReference>
<dbReference type="SUPFAM" id="SSF52540">
    <property type="entry name" value="P-loop containing nucleoside triphosphate hydrolases"/>
    <property type="match status" value="2"/>
</dbReference>
<dbReference type="PROSITE" id="PS51903">
    <property type="entry name" value="CLP_R"/>
    <property type="match status" value="1"/>
</dbReference>
<dbReference type="PROSITE" id="PS00870">
    <property type="entry name" value="CLPAB_1"/>
    <property type="match status" value="1"/>
</dbReference>
<dbReference type="PROSITE" id="PS00871">
    <property type="entry name" value="CLPAB_2"/>
    <property type="match status" value="1"/>
</dbReference>
<keyword id="KW-0067">ATP-binding</keyword>
<keyword id="KW-0143">Chaperone</keyword>
<keyword id="KW-0175">Coiled coil</keyword>
<keyword id="KW-0963">Cytoplasm</keyword>
<keyword id="KW-0547">Nucleotide-binding</keyword>
<keyword id="KW-0677">Repeat</keyword>
<keyword id="KW-0346">Stress response</keyword>
<reference key="1">
    <citation type="journal article" date="2004" name="J. Bacteriol.">
        <title>Complete genome sequence of Rickettsia typhi and comparison with sequences of other Rickettsiae.</title>
        <authorList>
            <person name="McLeod M.P."/>
            <person name="Qin X."/>
            <person name="Karpathy S.E."/>
            <person name="Gioia J."/>
            <person name="Highlander S.K."/>
            <person name="Fox G.E."/>
            <person name="McNeill T.Z."/>
            <person name="Jiang H."/>
            <person name="Muzny D."/>
            <person name="Jacob L.S."/>
            <person name="Hawes A.C."/>
            <person name="Sodergren E."/>
            <person name="Gill R."/>
            <person name="Hume J."/>
            <person name="Morgan M."/>
            <person name="Fan G."/>
            <person name="Amin A.G."/>
            <person name="Gibbs R.A."/>
            <person name="Hong C."/>
            <person name="Yu X.-J."/>
            <person name="Walker D.H."/>
            <person name="Weinstock G.M."/>
        </authorList>
    </citation>
    <scope>NUCLEOTIDE SEQUENCE [LARGE SCALE GENOMIC DNA]</scope>
    <source>
        <strain>ATCC VR-144 / Wilmington</strain>
    </source>
</reference>
<gene>
    <name type="primary">clpB</name>
    <name type="ordered locus">RT0094</name>
</gene>